<proteinExistence type="inferred from homology"/>
<accession>Q7MNF8</accession>
<evidence type="ECO:0000255" key="1">
    <source>
        <dbReference type="HAMAP-Rule" id="MF_00679"/>
    </source>
</evidence>
<evidence type="ECO:0000256" key="2">
    <source>
        <dbReference type="SAM" id="MobiDB-lite"/>
    </source>
</evidence>
<feature type="chain" id="PRO_0000078655" description="Chaperone protein HscA homolog">
    <location>
        <begin position="1"/>
        <end position="617"/>
    </location>
</feature>
<feature type="region of interest" description="Disordered" evidence="2">
    <location>
        <begin position="1"/>
        <end position="23"/>
    </location>
</feature>
<reference key="1">
    <citation type="journal article" date="2003" name="Genome Res.">
        <title>Comparative genome analysis of Vibrio vulnificus, a marine pathogen.</title>
        <authorList>
            <person name="Chen C.-Y."/>
            <person name="Wu K.-M."/>
            <person name="Chang Y.-C."/>
            <person name="Chang C.-H."/>
            <person name="Tsai H.-C."/>
            <person name="Liao T.-L."/>
            <person name="Liu Y.-M."/>
            <person name="Chen H.-J."/>
            <person name="Shen A.B.-T."/>
            <person name="Li J.-C."/>
            <person name="Su T.-L."/>
            <person name="Shao C.-P."/>
            <person name="Lee C.-T."/>
            <person name="Hor L.-I."/>
            <person name="Tsai S.-F."/>
        </authorList>
    </citation>
    <scope>NUCLEOTIDE SEQUENCE [LARGE SCALE GENOMIC DNA]</scope>
    <source>
        <strain>YJ016</strain>
    </source>
</reference>
<sequence>MALLQIAEPGQSSAPHEHKRAAGIDLGTTNSLVASVRSGTADTLKDAQGRSLLPSIVNYANEEAIVGYAAKALSESQPQDTIISVKRLLGRSLTDIQTRYPSLPYRFKASENGLPVLQTTQGDKNPIEVSADILKVLAKRAEESLGGELSGVVITVPAYFDDAQRAGTKDAAKLAGLHVLRLLNEPTAAAIAYGLDSGQEGVIAVYDLGGGTFDISILRLSKGVFEVLATGGDSALGGDDFDHLLADFLAEQVGLETPLSAEKNRTLLNIATATKIAFSEQDSVEVEVFGWKGVVTREQFEELIRPLVKKTLMSCRRALKDADVEADEVLEVVMVGGSTRTLLVREMVGEFFGRTPLTNINPDEVVAIGAGIQADILAGNKPDSEMLLLDVIPLSLGIETMGGLVEKIIPRNTTIPVARAQEFTTFKDGQTAMSVHIVQGEREMVDDCRSLARFSLKGIPPMAAGAAHIRVTYQVDADGLLSVTAMEKSTGVQSEIQVKPSYGLSDDEVANMLRDSMTYAKEDMQARALAEQRVEADRVIEGLIAAMQADGDELLSEAEKATLLQAIESLIELRNGNEANAIEQGIKDTDKASQDFASRRMDKSIRAALAGQSIDTI</sequence>
<organism>
    <name type="scientific">Vibrio vulnificus (strain YJ016)</name>
    <dbReference type="NCBI Taxonomy" id="196600"/>
    <lineage>
        <taxon>Bacteria</taxon>
        <taxon>Pseudomonadati</taxon>
        <taxon>Pseudomonadota</taxon>
        <taxon>Gammaproteobacteria</taxon>
        <taxon>Vibrionales</taxon>
        <taxon>Vibrionaceae</taxon>
        <taxon>Vibrio</taxon>
    </lineage>
</organism>
<dbReference type="EMBL" id="BA000037">
    <property type="protein sequence ID" value="BAC93523.1"/>
    <property type="molecule type" value="Genomic_DNA"/>
</dbReference>
<dbReference type="RefSeq" id="WP_011149603.1">
    <property type="nucleotide sequence ID" value="NC_005139.1"/>
</dbReference>
<dbReference type="SMR" id="Q7MNF8"/>
<dbReference type="STRING" id="672.VV93_v1c07050"/>
<dbReference type="KEGG" id="vvy:VV0759"/>
<dbReference type="PATRIC" id="fig|196600.6.peg.774"/>
<dbReference type="eggNOG" id="COG0443">
    <property type="taxonomic scope" value="Bacteria"/>
</dbReference>
<dbReference type="HOGENOM" id="CLU_005965_2_1_6"/>
<dbReference type="Proteomes" id="UP000002675">
    <property type="component" value="Chromosome I"/>
</dbReference>
<dbReference type="GO" id="GO:0005524">
    <property type="term" value="F:ATP binding"/>
    <property type="evidence" value="ECO:0007669"/>
    <property type="project" value="UniProtKB-KW"/>
</dbReference>
<dbReference type="GO" id="GO:0016887">
    <property type="term" value="F:ATP hydrolysis activity"/>
    <property type="evidence" value="ECO:0007669"/>
    <property type="project" value="UniProtKB-UniRule"/>
</dbReference>
<dbReference type="GO" id="GO:0140662">
    <property type="term" value="F:ATP-dependent protein folding chaperone"/>
    <property type="evidence" value="ECO:0007669"/>
    <property type="project" value="InterPro"/>
</dbReference>
<dbReference type="GO" id="GO:0051082">
    <property type="term" value="F:unfolded protein binding"/>
    <property type="evidence" value="ECO:0007669"/>
    <property type="project" value="InterPro"/>
</dbReference>
<dbReference type="GO" id="GO:0016226">
    <property type="term" value="P:iron-sulfur cluster assembly"/>
    <property type="evidence" value="ECO:0007669"/>
    <property type="project" value="InterPro"/>
</dbReference>
<dbReference type="CDD" id="cd10236">
    <property type="entry name" value="ASKHA_NBD_HSP70_HscA"/>
    <property type="match status" value="1"/>
</dbReference>
<dbReference type="FunFam" id="3.30.420.40:FF:000046">
    <property type="entry name" value="Chaperone protein HscA"/>
    <property type="match status" value="1"/>
</dbReference>
<dbReference type="FunFam" id="2.60.34.10:FF:000005">
    <property type="entry name" value="Chaperone protein HscA homolog"/>
    <property type="match status" value="1"/>
</dbReference>
<dbReference type="Gene3D" id="1.20.1270.10">
    <property type="match status" value="1"/>
</dbReference>
<dbReference type="Gene3D" id="3.30.420.40">
    <property type="match status" value="2"/>
</dbReference>
<dbReference type="Gene3D" id="3.90.640.10">
    <property type="entry name" value="Actin, Chain A, domain 4"/>
    <property type="match status" value="1"/>
</dbReference>
<dbReference type="Gene3D" id="2.60.34.10">
    <property type="entry name" value="Substrate Binding Domain Of DNAk, Chain A, domain 1"/>
    <property type="match status" value="1"/>
</dbReference>
<dbReference type="HAMAP" id="MF_00679">
    <property type="entry name" value="HscA"/>
    <property type="match status" value="1"/>
</dbReference>
<dbReference type="InterPro" id="IPR043129">
    <property type="entry name" value="ATPase_NBD"/>
</dbReference>
<dbReference type="InterPro" id="IPR018181">
    <property type="entry name" value="Heat_shock_70_CS"/>
</dbReference>
<dbReference type="InterPro" id="IPR042039">
    <property type="entry name" value="HscA_NBD"/>
</dbReference>
<dbReference type="InterPro" id="IPR029048">
    <property type="entry name" value="HSP70_C_sf"/>
</dbReference>
<dbReference type="InterPro" id="IPR029047">
    <property type="entry name" value="HSP70_peptide-bd_sf"/>
</dbReference>
<dbReference type="InterPro" id="IPR013126">
    <property type="entry name" value="Hsp_70_fam"/>
</dbReference>
<dbReference type="InterPro" id="IPR010236">
    <property type="entry name" value="ISC_FeS_clus_asmbl_HscA"/>
</dbReference>
<dbReference type="NCBIfam" id="TIGR01991">
    <property type="entry name" value="HscA"/>
    <property type="match status" value="1"/>
</dbReference>
<dbReference type="NCBIfam" id="NF003520">
    <property type="entry name" value="PRK05183.1"/>
    <property type="match status" value="1"/>
</dbReference>
<dbReference type="PANTHER" id="PTHR19375">
    <property type="entry name" value="HEAT SHOCK PROTEIN 70KDA"/>
    <property type="match status" value="1"/>
</dbReference>
<dbReference type="Pfam" id="PF00012">
    <property type="entry name" value="HSP70"/>
    <property type="match status" value="1"/>
</dbReference>
<dbReference type="PRINTS" id="PR00301">
    <property type="entry name" value="HEATSHOCK70"/>
</dbReference>
<dbReference type="SUPFAM" id="SSF53067">
    <property type="entry name" value="Actin-like ATPase domain"/>
    <property type="match status" value="2"/>
</dbReference>
<dbReference type="SUPFAM" id="SSF100934">
    <property type="entry name" value="Heat shock protein 70kD (HSP70), C-terminal subdomain"/>
    <property type="match status" value="1"/>
</dbReference>
<dbReference type="SUPFAM" id="SSF100920">
    <property type="entry name" value="Heat shock protein 70kD (HSP70), peptide-binding domain"/>
    <property type="match status" value="1"/>
</dbReference>
<dbReference type="PROSITE" id="PS00297">
    <property type="entry name" value="HSP70_1"/>
    <property type="match status" value="1"/>
</dbReference>
<dbReference type="PROSITE" id="PS00329">
    <property type="entry name" value="HSP70_2"/>
    <property type="match status" value="1"/>
</dbReference>
<gene>
    <name evidence="1" type="primary">hscA</name>
    <name type="ordered locus">VV0759</name>
</gene>
<name>HSCA_VIBVY</name>
<keyword id="KW-0067">ATP-binding</keyword>
<keyword id="KW-0143">Chaperone</keyword>
<keyword id="KW-0547">Nucleotide-binding</keyword>
<comment type="function">
    <text evidence="1">Chaperone involved in the maturation of iron-sulfur cluster-containing proteins. Has a low intrinsic ATPase activity which is markedly stimulated by HscB.</text>
</comment>
<comment type="similarity">
    <text evidence="1">Belongs to the heat shock protein 70 family.</text>
</comment>
<protein>
    <recommendedName>
        <fullName evidence="1">Chaperone protein HscA homolog</fullName>
    </recommendedName>
</protein>